<accession>F1QXM5</accession>
<accession>Q803V9</accession>
<organism>
    <name type="scientific">Danio rerio</name>
    <name type="common">Zebrafish</name>
    <name type="synonym">Brachydanio rerio</name>
    <dbReference type="NCBI Taxonomy" id="7955"/>
    <lineage>
        <taxon>Eukaryota</taxon>
        <taxon>Metazoa</taxon>
        <taxon>Chordata</taxon>
        <taxon>Craniata</taxon>
        <taxon>Vertebrata</taxon>
        <taxon>Euteleostomi</taxon>
        <taxon>Actinopterygii</taxon>
        <taxon>Neopterygii</taxon>
        <taxon>Teleostei</taxon>
        <taxon>Ostariophysi</taxon>
        <taxon>Cypriniformes</taxon>
        <taxon>Danionidae</taxon>
        <taxon>Danioninae</taxon>
        <taxon>Danio</taxon>
    </lineage>
</organism>
<keyword id="KW-0274">FAD</keyword>
<keyword id="KW-0285">Flavoprotein</keyword>
<keyword id="KW-0496">Mitochondrion</keyword>
<keyword id="KW-0560">Oxidoreductase</keyword>
<keyword id="KW-1185">Reference proteome</keyword>
<keyword id="KW-0809">Transit peptide</keyword>
<proteinExistence type="evidence at transcript level"/>
<evidence type="ECO:0000250" key="1">
    <source>
        <dbReference type="UniProtKB" id="P39976"/>
    </source>
</evidence>
<evidence type="ECO:0000250" key="2">
    <source>
        <dbReference type="UniProtKB" id="Q7TNG8"/>
    </source>
</evidence>
<evidence type="ECO:0000255" key="3">
    <source>
        <dbReference type="PROSITE-ProRule" id="PRU00718"/>
    </source>
</evidence>
<evidence type="ECO:0000269" key="4">
    <source>
    </source>
</evidence>
<evidence type="ECO:0000305" key="5"/>
<evidence type="ECO:0000305" key="6">
    <source>
    </source>
</evidence>
<feature type="chain" id="PRO_0000448096" description="Probable D-lactate dehydrogenase, mitochondrial">
    <location>
        <begin position="1"/>
        <end position="497"/>
    </location>
</feature>
<feature type="domain" description="FAD-binding PCMH-type" evidence="3">
    <location>
        <begin position="65"/>
        <end position="246"/>
    </location>
</feature>
<feature type="sequence conflict" description="In Ref. 2; AAH44171." evidence="5" ref="2">
    <original>G</original>
    <variation>S</variation>
    <location>
        <position position="110"/>
    </location>
</feature>
<feature type="sequence conflict" description="In Ref. 2; AAH44171." evidence="5" ref="2">
    <original>T</original>
    <variation>P</variation>
    <location>
        <position position="419"/>
    </location>
</feature>
<feature type="sequence conflict" description="In Ref. 2; AAH44171." evidence="5" ref="2">
    <original>V</original>
    <variation>L</variation>
    <location>
        <position position="461"/>
    </location>
</feature>
<feature type="sequence conflict" description="In Ref. 2; AAH44171." evidence="5" ref="2">
    <original>V</original>
    <variation>L</variation>
    <location>
        <position position="487"/>
    </location>
</feature>
<comment type="function">
    <text evidence="4">Involved in D-lactate, but not L-lactate catabolic process.</text>
</comment>
<comment type="catalytic activity">
    <reaction evidence="6">
        <text>(R)-lactate + 2 Fe(III)-[cytochrome c] = 2 Fe(II)-[cytochrome c] + pyruvate + 2 H(+)</text>
        <dbReference type="Rhea" id="RHEA:13521"/>
        <dbReference type="Rhea" id="RHEA-COMP:10350"/>
        <dbReference type="Rhea" id="RHEA-COMP:14399"/>
        <dbReference type="ChEBI" id="CHEBI:15361"/>
        <dbReference type="ChEBI" id="CHEBI:15378"/>
        <dbReference type="ChEBI" id="CHEBI:16004"/>
        <dbReference type="ChEBI" id="CHEBI:29033"/>
        <dbReference type="ChEBI" id="CHEBI:29034"/>
        <dbReference type="EC" id="1.1.2.4"/>
    </reaction>
</comment>
<comment type="cofactor">
    <cofactor evidence="1">
        <name>FAD</name>
        <dbReference type="ChEBI" id="CHEBI:57692"/>
    </cofactor>
</comment>
<comment type="subcellular location">
    <subcellularLocation>
        <location evidence="2">Mitochondrion</location>
    </subcellularLocation>
</comment>
<comment type="disruption phenotype">
    <text evidence="4">At 3 dpf, mutant embryos show no visible abnormalities compared to wild-type embryos. They do not display any ocular abnormalities at 5 dpf. They nevertheless exhibit elevated levels of D-lactate, but not L-lactate compared to wild-type larvae.</text>
</comment>
<comment type="similarity">
    <text>Belongs to the FAD-binding oxidoreductase/transferase type 4 family.</text>
</comment>
<sequence length="497" mass="53954">MTLFRHLVRITSPRLPFICGSSRRFSAKTAAVERVVSSFRSVTGDEGVSVGSAVREQHGRDESVHRCRPPDVVVFPRSVEEVSALAKICHHYRLPIIPFGTGTGLEGGVGALQGGVCFSLRKMEQVVDLHQEDFDVTVEPGVTRKSLNSYLRDTGLWFPVDPGADASLCGMAATSASGTNAVRYGTMRENVLNLEVVLADGTILHTAGKGRRPRKTAAGYNLTNLFVGSEGTLGIITKATLRLYGVPESMVSAVCSFPSVQSAVDSTVQILQAGVPIARIEFLDDVMINACNRFNNLSYAVTPTLFLEFHGSSKSMEEQVSVTEEITRDNGGSDFAWAEDEETRSRLWKARHDAWYAAMALRPGCKAYSTDVCVPISRLPQIIVETKADLISNNITGPIAGHVGDGNFHCLIVLDPNDTDEVQRVHSFTERLARRALAMDGTCTGEHGIGLGKRALLREEVGPLAIEVMKGLKASLDPRNLMNPGKVLELTQTNTEQ</sequence>
<reference key="1">
    <citation type="journal article" date="2013" name="Nature">
        <title>The zebrafish reference genome sequence and its relationship to the human genome.</title>
        <authorList>
            <person name="Howe K."/>
            <person name="Clark M.D."/>
            <person name="Torroja C.F."/>
            <person name="Torrance J."/>
            <person name="Berthelot C."/>
            <person name="Muffato M."/>
            <person name="Collins J.E."/>
            <person name="Humphray S."/>
            <person name="McLaren K."/>
            <person name="Matthews L."/>
            <person name="McLaren S."/>
            <person name="Sealy I."/>
            <person name="Caccamo M."/>
            <person name="Churcher C."/>
            <person name="Scott C."/>
            <person name="Barrett J.C."/>
            <person name="Koch R."/>
            <person name="Rauch G.J."/>
            <person name="White S."/>
            <person name="Chow W."/>
            <person name="Kilian B."/>
            <person name="Quintais L.T."/>
            <person name="Guerra-Assuncao J.A."/>
            <person name="Zhou Y."/>
            <person name="Gu Y."/>
            <person name="Yen J."/>
            <person name="Vogel J.H."/>
            <person name="Eyre T."/>
            <person name="Redmond S."/>
            <person name="Banerjee R."/>
            <person name="Chi J."/>
            <person name="Fu B."/>
            <person name="Langley E."/>
            <person name="Maguire S.F."/>
            <person name="Laird G.K."/>
            <person name="Lloyd D."/>
            <person name="Kenyon E."/>
            <person name="Donaldson S."/>
            <person name="Sehra H."/>
            <person name="Almeida-King J."/>
            <person name="Loveland J."/>
            <person name="Trevanion S."/>
            <person name="Jones M."/>
            <person name="Quail M."/>
            <person name="Willey D."/>
            <person name="Hunt A."/>
            <person name="Burton J."/>
            <person name="Sims S."/>
            <person name="McLay K."/>
            <person name="Plumb B."/>
            <person name="Davis J."/>
            <person name="Clee C."/>
            <person name="Oliver K."/>
            <person name="Clark R."/>
            <person name="Riddle C."/>
            <person name="Elliot D."/>
            <person name="Threadgold G."/>
            <person name="Harden G."/>
            <person name="Ware D."/>
            <person name="Begum S."/>
            <person name="Mortimore B."/>
            <person name="Kerry G."/>
            <person name="Heath P."/>
            <person name="Phillimore B."/>
            <person name="Tracey A."/>
            <person name="Corby N."/>
            <person name="Dunn M."/>
            <person name="Johnson C."/>
            <person name="Wood J."/>
            <person name="Clark S."/>
            <person name="Pelan S."/>
            <person name="Griffiths G."/>
            <person name="Smith M."/>
            <person name="Glithero R."/>
            <person name="Howden P."/>
            <person name="Barker N."/>
            <person name="Lloyd C."/>
            <person name="Stevens C."/>
            <person name="Harley J."/>
            <person name="Holt K."/>
            <person name="Panagiotidis G."/>
            <person name="Lovell J."/>
            <person name="Beasley H."/>
            <person name="Henderson C."/>
            <person name="Gordon D."/>
            <person name="Auger K."/>
            <person name="Wright D."/>
            <person name="Collins J."/>
            <person name="Raisen C."/>
            <person name="Dyer L."/>
            <person name="Leung K."/>
            <person name="Robertson L."/>
            <person name="Ambridge K."/>
            <person name="Leongamornlert D."/>
            <person name="McGuire S."/>
            <person name="Gilderthorp R."/>
            <person name="Griffiths C."/>
            <person name="Manthravadi D."/>
            <person name="Nichol S."/>
            <person name="Barker G."/>
            <person name="Whitehead S."/>
            <person name="Kay M."/>
            <person name="Brown J."/>
            <person name="Murnane C."/>
            <person name="Gray E."/>
            <person name="Humphries M."/>
            <person name="Sycamore N."/>
            <person name="Barker D."/>
            <person name="Saunders D."/>
            <person name="Wallis J."/>
            <person name="Babbage A."/>
            <person name="Hammond S."/>
            <person name="Mashreghi-Mohammadi M."/>
            <person name="Barr L."/>
            <person name="Martin S."/>
            <person name="Wray P."/>
            <person name="Ellington A."/>
            <person name="Matthews N."/>
            <person name="Ellwood M."/>
            <person name="Woodmansey R."/>
            <person name="Clark G."/>
            <person name="Cooper J."/>
            <person name="Tromans A."/>
            <person name="Grafham D."/>
            <person name="Skuce C."/>
            <person name="Pandian R."/>
            <person name="Andrews R."/>
            <person name="Harrison E."/>
            <person name="Kimberley A."/>
            <person name="Garnett J."/>
            <person name="Fosker N."/>
            <person name="Hall R."/>
            <person name="Garner P."/>
            <person name="Kelly D."/>
            <person name="Bird C."/>
            <person name="Palmer S."/>
            <person name="Gehring I."/>
            <person name="Berger A."/>
            <person name="Dooley C.M."/>
            <person name="Ersan-Urun Z."/>
            <person name="Eser C."/>
            <person name="Geiger H."/>
            <person name="Geisler M."/>
            <person name="Karotki L."/>
            <person name="Kirn A."/>
            <person name="Konantz J."/>
            <person name="Konantz M."/>
            <person name="Oberlander M."/>
            <person name="Rudolph-Geiger S."/>
            <person name="Teucke M."/>
            <person name="Lanz C."/>
            <person name="Raddatz G."/>
            <person name="Osoegawa K."/>
            <person name="Zhu B."/>
            <person name="Rapp A."/>
            <person name="Widaa S."/>
            <person name="Langford C."/>
            <person name="Yang F."/>
            <person name="Schuster S.C."/>
            <person name="Carter N.P."/>
            <person name="Harrow J."/>
            <person name="Ning Z."/>
            <person name="Herrero J."/>
            <person name="Searle S.M."/>
            <person name="Enright A."/>
            <person name="Geisler R."/>
            <person name="Plasterk R.H."/>
            <person name="Lee C."/>
            <person name="Westerfield M."/>
            <person name="de Jong P.J."/>
            <person name="Zon L.I."/>
            <person name="Postlethwait J.H."/>
            <person name="Nusslein-Volhard C."/>
            <person name="Hubbard T.J."/>
            <person name="Roest Crollius H."/>
            <person name="Rogers J."/>
            <person name="Stemple D.L."/>
        </authorList>
    </citation>
    <scope>NUCLEOTIDE SEQUENCE [LARGE SCALE GENOMIC DNA]</scope>
    <source>
        <strain>Tuebingen</strain>
    </source>
</reference>
<reference key="2">
    <citation type="submission" date="2003-01" db="EMBL/GenBank/DDBJ databases">
        <authorList>
            <consortium name="NIH - Zebrafish Gene Collection (ZGC) project"/>
        </authorList>
    </citation>
    <scope>NUCLEOTIDE SEQUENCE [LARGE SCALE MRNA]</scope>
    <source>
        <strain>AB</strain>
    </source>
</reference>
<reference key="3">
    <citation type="journal article" date="2019" name="Nat. Commun.">
        <title>Identification of human D lactate dehydrogenase deficiency.</title>
        <authorList>
            <person name="Monroe G.R."/>
            <person name="van Eerde A.M."/>
            <person name="Tessadori F."/>
            <person name="Duran K.J."/>
            <person name="Savelberg S.M.C."/>
            <person name="van Alfen J.C."/>
            <person name="Terhal P.A."/>
            <person name="van der Crabben S.N."/>
            <person name="Lichtenbelt K.D."/>
            <person name="Fuchs S.A."/>
            <person name="Gerrits J."/>
            <person name="van Roosmalen M.J."/>
            <person name="van Gassen K.L."/>
            <person name="van Aalderen M."/>
            <person name="Koot B.G."/>
            <person name="Oostendorp M."/>
            <person name="Duran M."/>
            <person name="Visser G."/>
            <person name="de Koning T.J."/>
            <person name="Cali F."/>
            <person name="Bosco P."/>
            <person name="Geleijns K."/>
            <person name="de Sain-van der Velden M.G.M."/>
            <person name="Knoers N.V."/>
            <person name="Bakkers J."/>
            <person name="Verhoeven-Duif N.M."/>
            <person name="van Haaften G."/>
            <person name="Jans J.J."/>
        </authorList>
    </citation>
    <scope>FUNCTION</scope>
    <scope>DISRUPTION PHENOTYPE</scope>
</reference>
<protein>
    <recommendedName>
        <fullName>Probable D-lactate dehydrogenase, mitochondrial</fullName>
        <shortName>DLD</shortName>
        <shortName>Lactate dehydrogenase D</shortName>
        <ecNumber evidence="6">1.1.2.4</ecNumber>
    </recommendedName>
</protein>
<dbReference type="EC" id="1.1.2.4" evidence="6"/>
<dbReference type="EMBL" id="CR388073">
    <property type="status" value="NOT_ANNOTATED_CDS"/>
    <property type="molecule type" value="Genomic_DNA"/>
</dbReference>
<dbReference type="EMBL" id="BC044171">
    <property type="protein sequence ID" value="AAH44171.1"/>
    <property type="molecule type" value="mRNA"/>
</dbReference>
<dbReference type="RefSeq" id="NP_956167.1">
    <property type="nucleotide sequence ID" value="NM_199873.1"/>
</dbReference>
<dbReference type="SMR" id="F1QXM5"/>
<dbReference type="FunCoup" id="F1QXM5">
    <property type="interactions" value="341"/>
</dbReference>
<dbReference type="STRING" id="7955.ENSDARP00000056720"/>
<dbReference type="PaxDb" id="7955-ENSDARP00000056720"/>
<dbReference type="Ensembl" id="ENSDART00000056721">
    <property type="protein sequence ID" value="ENSDARP00000056720"/>
    <property type="gene ID" value="ENSDARG00000038845"/>
</dbReference>
<dbReference type="GeneID" id="334208"/>
<dbReference type="KEGG" id="dre:334208"/>
<dbReference type="AGR" id="ZFIN:ZDB-GENE-030131-6140"/>
<dbReference type="CTD" id="197257"/>
<dbReference type="ZFIN" id="ZDB-GENE-030131-6140">
    <property type="gene designation" value="ldhd"/>
</dbReference>
<dbReference type="eggNOG" id="KOG1231">
    <property type="taxonomic scope" value="Eukaryota"/>
</dbReference>
<dbReference type="HOGENOM" id="CLU_017779_3_0_1"/>
<dbReference type="InParanoid" id="F1QXM5"/>
<dbReference type="OMA" id="GQGFEWA"/>
<dbReference type="OrthoDB" id="5332616at2759"/>
<dbReference type="PhylomeDB" id="F1QXM5"/>
<dbReference type="TreeFam" id="TF314122"/>
<dbReference type="Reactome" id="R-DRE-1268020">
    <property type="pathway name" value="Mitochondrial protein import"/>
</dbReference>
<dbReference type="PRO" id="PR:F1QXM5"/>
<dbReference type="Proteomes" id="UP000000437">
    <property type="component" value="Chromosome 25"/>
</dbReference>
<dbReference type="Bgee" id="ENSDARG00000038845">
    <property type="expression patterns" value="Expressed in heart and 24 other cell types or tissues"/>
</dbReference>
<dbReference type="GO" id="GO:0005739">
    <property type="term" value="C:mitochondrion"/>
    <property type="evidence" value="ECO:0000318"/>
    <property type="project" value="GO_Central"/>
</dbReference>
<dbReference type="GO" id="GO:0004458">
    <property type="term" value="F:D-lactate dehydrogenase (cytochrome) activity"/>
    <property type="evidence" value="ECO:0000318"/>
    <property type="project" value="GO_Central"/>
</dbReference>
<dbReference type="GO" id="GO:0008720">
    <property type="term" value="F:D-lactate dehydrogenase activity"/>
    <property type="evidence" value="ECO:0000318"/>
    <property type="project" value="GO_Central"/>
</dbReference>
<dbReference type="GO" id="GO:0071949">
    <property type="term" value="F:FAD binding"/>
    <property type="evidence" value="ECO:0007669"/>
    <property type="project" value="InterPro"/>
</dbReference>
<dbReference type="GO" id="GO:0050660">
    <property type="term" value="F:flavin adenine dinucleotide binding"/>
    <property type="evidence" value="ECO:0000318"/>
    <property type="project" value="GO_Central"/>
</dbReference>
<dbReference type="GO" id="GO:1903457">
    <property type="term" value="P:lactate catabolic process"/>
    <property type="evidence" value="ECO:0000315"/>
    <property type="project" value="UniProtKB"/>
</dbReference>
<dbReference type="FunFam" id="1.10.45.10:FF:000001">
    <property type="entry name" value="D-lactate dehydrogenase mitochondrial"/>
    <property type="match status" value="1"/>
</dbReference>
<dbReference type="FunFam" id="3.30.70.2740:FF:000001">
    <property type="entry name" value="D-lactate dehydrogenase mitochondrial"/>
    <property type="match status" value="1"/>
</dbReference>
<dbReference type="FunFam" id="3.30.465.10:FF:000030">
    <property type="entry name" value="probable D-lactate dehydrogenase, mitochondrial"/>
    <property type="match status" value="1"/>
</dbReference>
<dbReference type="Gene3D" id="3.30.465.10">
    <property type="match status" value="1"/>
</dbReference>
<dbReference type="Gene3D" id="3.30.70.2740">
    <property type="match status" value="1"/>
</dbReference>
<dbReference type="Gene3D" id="1.10.45.10">
    <property type="entry name" value="Vanillyl-alcohol Oxidase, Chain A, domain 4"/>
    <property type="match status" value="1"/>
</dbReference>
<dbReference type="InterPro" id="IPR004113">
    <property type="entry name" value="FAD-bd_oxidored_4_C"/>
</dbReference>
<dbReference type="InterPro" id="IPR016166">
    <property type="entry name" value="FAD-bd_PCMH"/>
</dbReference>
<dbReference type="InterPro" id="IPR036318">
    <property type="entry name" value="FAD-bd_PCMH-like_sf"/>
</dbReference>
<dbReference type="InterPro" id="IPR016169">
    <property type="entry name" value="FAD-bd_PCMH_sub2"/>
</dbReference>
<dbReference type="InterPro" id="IPR016164">
    <property type="entry name" value="FAD-linked_Oxase-like_C"/>
</dbReference>
<dbReference type="InterPro" id="IPR006094">
    <property type="entry name" value="Oxid_FAD_bind_N"/>
</dbReference>
<dbReference type="InterPro" id="IPR016171">
    <property type="entry name" value="Vanillyl_alc_oxidase_C-sub2"/>
</dbReference>
<dbReference type="PANTHER" id="PTHR11748">
    <property type="entry name" value="D-LACTATE DEHYDROGENASE"/>
    <property type="match status" value="1"/>
</dbReference>
<dbReference type="PANTHER" id="PTHR11748:SF111">
    <property type="entry name" value="D-LACTATE DEHYDROGENASE, MITOCHONDRIAL-RELATED"/>
    <property type="match status" value="1"/>
</dbReference>
<dbReference type="Pfam" id="PF02913">
    <property type="entry name" value="FAD-oxidase_C"/>
    <property type="match status" value="1"/>
</dbReference>
<dbReference type="Pfam" id="PF01565">
    <property type="entry name" value="FAD_binding_4"/>
    <property type="match status" value="1"/>
</dbReference>
<dbReference type="SUPFAM" id="SSF56176">
    <property type="entry name" value="FAD-binding/transporter-associated domain-like"/>
    <property type="match status" value="1"/>
</dbReference>
<dbReference type="SUPFAM" id="SSF55103">
    <property type="entry name" value="FAD-linked oxidases, C-terminal domain"/>
    <property type="match status" value="1"/>
</dbReference>
<dbReference type="PROSITE" id="PS51387">
    <property type="entry name" value="FAD_PCMH"/>
    <property type="match status" value="1"/>
</dbReference>
<gene>
    <name type="primary">ldhd</name>
</gene>
<name>LDHD_DANRE</name>